<keyword id="KW-0028">Amino-acid biosynthesis</keyword>
<keyword id="KW-0368">Histidine biosynthesis</keyword>
<keyword id="KW-0378">Hydrolase</keyword>
<keyword id="KW-0486">Methionine biosynthesis</keyword>
<keyword id="KW-0511">Multifunctional enzyme</keyword>
<keyword id="KW-0521">NADP</keyword>
<keyword id="KW-0554">One-carbon metabolism</keyword>
<keyword id="KW-0560">Oxidoreductase</keyword>
<keyword id="KW-0658">Purine biosynthesis</keyword>
<gene>
    <name evidence="1" type="primary">folD1</name>
    <name type="ordered locus">ACIAD2553</name>
</gene>
<accession>Q6F9E6</accession>
<sequence length="297" mass="32298">MSLALLQQHSPKIIDGKAIAQSVLEEVKLEVERYKAQGIEPCLAVVLVGEDPASQVYVRNKVQKAAFVGIRSLEFRFDADLSEDELLTQIDRLNTERGVHGILVQLPLPKQINETRVLERIHPQKDVDGFHSENVGGLSQGRDVLTPCTPTGCIRLLKDSLGDDLSGLHAVVIGRSNIVGKPMAALLLKESCTVTVVHSKTRNIEQVCQQADIVVAAVGKANMINASYLKADAVVIDVGINRIMTHEKTRLVGDVDFEDALPMVSAITPVPGGVGPMTIAYLMKNTLQAVRLQHPQI</sequence>
<reference key="1">
    <citation type="journal article" date="2004" name="Nucleic Acids Res.">
        <title>Unique features revealed by the genome sequence of Acinetobacter sp. ADP1, a versatile and naturally transformation competent bacterium.</title>
        <authorList>
            <person name="Barbe V."/>
            <person name="Vallenet D."/>
            <person name="Fonknechten N."/>
            <person name="Kreimeyer A."/>
            <person name="Oztas S."/>
            <person name="Labarre L."/>
            <person name="Cruveiller S."/>
            <person name="Robert C."/>
            <person name="Duprat S."/>
            <person name="Wincker P."/>
            <person name="Ornston L.N."/>
            <person name="Weissenbach J."/>
            <person name="Marliere P."/>
            <person name="Cohen G.N."/>
            <person name="Medigue C."/>
        </authorList>
    </citation>
    <scope>NUCLEOTIDE SEQUENCE [LARGE SCALE GENOMIC DNA]</scope>
    <source>
        <strain>ATCC 33305 / BD413 / ADP1</strain>
    </source>
</reference>
<proteinExistence type="inferred from homology"/>
<name>FOLD1_ACIAD</name>
<comment type="function">
    <text evidence="1">Catalyzes the oxidation of 5,10-methylenetetrahydrofolate to 5,10-methenyltetrahydrofolate and then the hydrolysis of 5,10-methenyltetrahydrofolate to 10-formyltetrahydrofolate.</text>
</comment>
<comment type="catalytic activity">
    <reaction evidence="1">
        <text>(6R)-5,10-methylene-5,6,7,8-tetrahydrofolate + NADP(+) = (6R)-5,10-methenyltetrahydrofolate + NADPH</text>
        <dbReference type="Rhea" id="RHEA:22812"/>
        <dbReference type="ChEBI" id="CHEBI:15636"/>
        <dbReference type="ChEBI" id="CHEBI:57455"/>
        <dbReference type="ChEBI" id="CHEBI:57783"/>
        <dbReference type="ChEBI" id="CHEBI:58349"/>
        <dbReference type="EC" id="1.5.1.5"/>
    </reaction>
</comment>
<comment type="catalytic activity">
    <reaction evidence="1">
        <text>(6R)-5,10-methenyltetrahydrofolate + H2O = (6R)-10-formyltetrahydrofolate + H(+)</text>
        <dbReference type="Rhea" id="RHEA:23700"/>
        <dbReference type="ChEBI" id="CHEBI:15377"/>
        <dbReference type="ChEBI" id="CHEBI:15378"/>
        <dbReference type="ChEBI" id="CHEBI:57455"/>
        <dbReference type="ChEBI" id="CHEBI:195366"/>
        <dbReference type="EC" id="3.5.4.9"/>
    </reaction>
</comment>
<comment type="pathway">
    <text evidence="1">One-carbon metabolism; tetrahydrofolate interconversion.</text>
</comment>
<comment type="subunit">
    <text evidence="1">Homodimer.</text>
</comment>
<comment type="similarity">
    <text evidence="1">Belongs to the tetrahydrofolate dehydrogenase/cyclohydrolase family.</text>
</comment>
<feature type="chain" id="PRO_0000268252" description="Bifunctional protein FolD 1">
    <location>
        <begin position="1"/>
        <end position="297"/>
    </location>
</feature>
<feature type="binding site" evidence="1">
    <location>
        <begin position="174"/>
        <end position="176"/>
    </location>
    <ligand>
        <name>NADP(+)</name>
        <dbReference type="ChEBI" id="CHEBI:58349"/>
    </ligand>
</feature>
<feature type="binding site" evidence="1">
    <location>
        <position position="199"/>
    </location>
    <ligand>
        <name>NADP(+)</name>
        <dbReference type="ChEBI" id="CHEBI:58349"/>
    </ligand>
</feature>
<feature type="binding site" evidence="1">
    <location>
        <position position="240"/>
    </location>
    <ligand>
        <name>NADP(+)</name>
        <dbReference type="ChEBI" id="CHEBI:58349"/>
    </ligand>
</feature>
<organism>
    <name type="scientific">Acinetobacter baylyi (strain ATCC 33305 / BD413 / ADP1)</name>
    <dbReference type="NCBI Taxonomy" id="62977"/>
    <lineage>
        <taxon>Bacteria</taxon>
        <taxon>Pseudomonadati</taxon>
        <taxon>Pseudomonadota</taxon>
        <taxon>Gammaproteobacteria</taxon>
        <taxon>Moraxellales</taxon>
        <taxon>Moraxellaceae</taxon>
        <taxon>Acinetobacter</taxon>
    </lineage>
</organism>
<protein>
    <recommendedName>
        <fullName evidence="1">Bifunctional protein FolD 1</fullName>
    </recommendedName>
    <domain>
        <recommendedName>
            <fullName evidence="1">Methylenetetrahydrofolate dehydrogenase</fullName>
            <ecNumber evidence="1">1.5.1.5</ecNumber>
        </recommendedName>
    </domain>
    <domain>
        <recommendedName>
            <fullName evidence="1">Methenyltetrahydrofolate cyclohydrolase</fullName>
            <ecNumber evidence="1">3.5.4.9</ecNumber>
        </recommendedName>
    </domain>
</protein>
<dbReference type="EC" id="1.5.1.5" evidence="1"/>
<dbReference type="EC" id="3.5.4.9" evidence="1"/>
<dbReference type="EMBL" id="CR543861">
    <property type="protein sequence ID" value="CAG69318.1"/>
    <property type="molecule type" value="Genomic_DNA"/>
</dbReference>
<dbReference type="SMR" id="Q6F9E6"/>
<dbReference type="STRING" id="202950.GCA_001485005_01464"/>
<dbReference type="GeneID" id="45234837"/>
<dbReference type="KEGG" id="aci:ACIAD2553"/>
<dbReference type="eggNOG" id="COG0190">
    <property type="taxonomic scope" value="Bacteria"/>
</dbReference>
<dbReference type="HOGENOM" id="CLU_034045_2_1_6"/>
<dbReference type="OrthoDB" id="9803580at2"/>
<dbReference type="BioCyc" id="ASP62977:ACIAD_RS11600-MONOMER"/>
<dbReference type="UniPathway" id="UPA00193"/>
<dbReference type="Proteomes" id="UP000000430">
    <property type="component" value="Chromosome"/>
</dbReference>
<dbReference type="GO" id="GO:0005829">
    <property type="term" value="C:cytosol"/>
    <property type="evidence" value="ECO:0007669"/>
    <property type="project" value="TreeGrafter"/>
</dbReference>
<dbReference type="GO" id="GO:0004477">
    <property type="term" value="F:methenyltetrahydrofolate cyclohydrolase activity"/>
    <property type="evidence" value="ECO:0007669"/>
    <property type="project" value="UniProtKB-UniRule"/>
</dbReference>
<dbReference type="GO" id="GO:0004488">
    <property type="term" value="F:methylenetetrahydrofolate dehydrogenase (NADP+) activity"/>
    <property type="evidence" value="ECO:0007669"/>
    <property type="project" value="UniProtKB-UniRule"/>
</dbReference>
<dbReference type="GO" id="GO:0000105">
    <property type="term" value="P:L-histidine biosynthetic process"/>
    <property type="evidence" value="ECO:0007669"/>
    <property type="project" value="UniProtKB-KW"/>
</dbReference>
<dbReference type="GO" id="GO:0009086">
    <property type="term" value="P:methionine biosynthetic process"/>
    <property type="evidence" value="ECO:0007669"/>
    <property type="project" value="UniProtKB-KW"/>
</dbReference>
<dbReference type="GO" id="GO:0006164">
    <property type="term" value="P:purine nucleotide biosynthetic process"/>
    <property type="evidence" value="ECO:0007669"/>
    <property type="project" value="UniProtKB-KW"/>
</dbReference>
<dbReference type="GO" id="GO:0035999">
    <property type="term" value="P:tetrahydrofolate interconversion"/>
    <property type="evidence" value="ECO:0007669"/>
    <property type="project" value="UniProtKB-UniRule"/>
</dbReference>
<dbReference type="CDD" id="cd01080">
    <property type="entry name" value="NAD_bind_m-THF_DH_Cyclohyd"/>
    <property type="match status" value="1"/>
</dbReference>
<dbReference type="FunFam" id="3.40.50.720:FF:000006">
    <property type="entry name" value="Bifunctional protein FolD"/>
    <property type="match status" value="1"/>
</dbReference>
<dbReference type="FunFam" id="3.40.50.10860:FF:000005">
    <property type="entry name" value="C-1-tetrahydrofolate synthase, cytoplasmic, putative"/>
    <property type="match status" value="1"/>
</dbReference>
<dbReference type="Gene3D" id="3.40.50.10860">
    <property type="entry name" value="Leucine Dehydrogenase, chain A, domain 1"/>
    <property type="match status" value="1"/>
</dbReference>
<dbReference type="Gene3D" id="3.40.50.720">
    <property type="entry name" value="NAD(P)-binding Rossmann-like Domain"/>
    <property type="match status" value="1"/>
</dbReference>
<dbReference type="HAMAP" id="MF_01576">
    <property type="entry name" value="THF_DHG_CYH"/>
    <property type="match status" value="1"/>
</dbReference>
<dbReference type="InterPro" id="IPR046346">
    <property type="entry name" value="Aminoacid_DH-like_N_sf"/>
</dbReference>
<dbReference type="InterPro" id="IPR036291">
    <property type="entry name" value="NAD(P)-bd_dom_sf"/>
</dbReference>
<dbReference type="InterPro" id="IPR000672">
    <property type="entry name" value="THF_DH/CycHdrlase"/>
</dbReference>
<dbReference type="InterPro" id="IPR020630">
    <property type="entry name" value="THF_DH/CycHdrlase_cat_dom"/>
</dbReference>
<dbReference type="InterPro" id="IPR020867">
    <property type="entry name" value="THF_DH/CycHdrlase_CS"/>
</dbReference>
<dbReference type="InterPro" id="IPR020631">
    <property type="entry name" value="THF_DH/CycHdrlase_NAD-bd_dom"/>
</dbReference>
<dbReference type="NCBIfam" id="NF008058">
    <property type="entry name" value="PRK10792.1"/>
    <property type="match status" value="1"/>
</dbReference>
<dbReference type="NCBIfam" id="NF010785">
    <property type="entry name" value="PRK14188.1"/>
    <property type="match status" value="1"/>
</dbReference>
<dbReference type="PANTHER" id="PTHR48099:SF5">
    <property type="entry name" value="C-1-TETRAHYDROFOLATE SYNTHASE, CYTOPLASMIC"/>
    <property type="match status" value="1"/>
</dbReference>
<dbReference type="PANTHER" id="PTHR48099">
    <property type="entry name" value="C-1-TETRAHYDROFOLATE SYNTHASE, CYTOPLASMIC-RELATED"/>
    <property type="match status" value="1"/>
</dbReference>
<dbReference type="Pfam" id="PF00763">
    <property type="entry name" value="THF_DHG_CYH"/>
    <property type="match status" value="1"/>
</dbReference>
<dbReference type="Pfam" id="PF02882">
    <property type="entry name" value="THF_DHG_CYH_C"/>
    <property type="match status" value="1"/>
</dbReference>
<dbReference type="PRINTS" id="PR00085">
    <property type="entry name" value="THFDHDRGNASE"/>
</dbReference>
<dbReference type="SUPFAM" id="SSF53223">
    <property type="entry name" value="Aminoacid dehydrogenase-like, N-terminal domain"/>
    <property type="match status" value="1"/>
</dbReference>
<dbReference type="SUPFAM" id="SSF51735">
    <property type="entry name" value="NAD(P)-binding Rossmann-fold domains"/>
    <property type="match status" value="1"/>
</dbReference>
<dbReference type="PROSITE" id="PS00767">
    <property type="entry name" value="THF_DHG_CYH_2"/>
    <property type="match status" value="1"/>
</dbReference>
<evidence type="ECO:0000255" key="1">
    <source>
        <dbReference type="HAMAP-Rule" id="MF_01576"/>
    </source>
</evidence>